<keyword id="KW-0238">DNA-binding</keyword>
<keyword id="KW-0255">Endonuclease</keyword>
<keyword id="KW-0378">Hydrolase</keyword>
<keyword id="KW-0540">Nuclease</keyword>
<keyword id="KW-1185">Reference proteome</keyword>
<keyword id="KW-0680">Restriction system</keyword>
<evidence type="ECO:0000303" key="1">
    <source>
    </source>
</evidence>
<organism>
    <name type="scientific">Methanocaldococcus jannaschii (strain ATCC 43067 / DSM 2661 / JAL-1 / JCM 10045 / NBRC 100440)</name>
    <name type="common">Methanococcus jannaschii</name>
    <dbReference type="NCBI Taxonomy" id="243232"/>
    <lineage>
        <taxon>Archaea</taxon>
        <taxon>Methanobacteriati</taxon>
        <taxon>Methanobacteriota</taxon>
        <taxon>Methanomada group</taxon>
        <taxon>Methanococci</taxon>
        <taxon>Methanococcales</taxon>
        <taxon>Methanocaldococcaceae</taxon>
        <taxon>Methanocaldococcus</taxon>
    </lineage>
</organism>
<proteinExistence type="evidence at protein level"/>
<name>T2M1_METJA</name>
<gene>
    <name type="primary">mjaIR</name>
    <name type="ordered locus">MJ0984</name>
</gene>
<comment type="function">
    <text evidence="1">A P subtype restriction enzyme that recognizes the double-stranded sequence 5'-CTAG-3'; the cleavage site is unknown.</text>
</comment>
<comment type="catalytic activity">
    <reaction>
        <text>Endonucleolytic cleavage of DNA to give specific double-stranded fragments with terminal 5'-phosphates.</text>
        <dbReference type="EC" id="3.1.21.4"/>
    </reaction>
</comment>
<accession>Q58391</accession>
<feature type="chain" id="PRO_0000077332" description="Type II restriction enzyme MjaI">
    <location>
        <begin position="1"/>
        <end position="222"/>
    </location>
</feature>
<reference key="1">
    <citation type="journal article" date="1996" name="Science">
        <title>Complete genome sequence of the methanogenic archaeon, Methanococcus jannaschii.</title>
        <authorList>
            <person name="Bult C.J."/>
            <person name="White O."/>
            <person name="Olsen G.J."/>
            <person name="Zhou L."/>
            <person name="Fleischmann R.D."/>
            <person name="Sutton G.G."/>
            <person name="Blake J.A."/>
            <person name="FitzGerald L.M."/>
            <person name="Clayton R.A."/>
            <person name="Gocayne J.D."/>
            <person name="Kerlavage A.R."/>
            <person name="Dougherty B.A."/>
            <person name="Tomb J.-F."/>
            <person name="Adams M.D."/>
            <person name="Reich C.I."/>
            <person name="Overbeek R."/>
            <person name="Kirkness E.F."/>
            <person name="Weinstock K.G."/>
            <person name="Merrick J.M."/>
            <person name="Glodek A."/>
            <person name="Scott J.L."/>
            <person name="Geoghagen N.S.M."/>
            <person name="Weidman J.F."/>
            <person name="Fuhrmann J.L."/>
            <person name="Nguyen D."/>
            <person name="Utterback T.R."/>
            <person name="Kelley J.M."/>
            <person name="Peterson J.D."/>
            <person name="Sadow P.W."/>
            <person name="Hanna M.C."/>
            <person name="Cotton M.D."/>
            <person name="Roberts K.M."/>
            <person name="Hurst M.A."/>
            <person name="Kaine B.P."/>
            <person name="Borodovsky M."/>
            <person name="Klenk H.-P."/>
            <person name="Fraser C.M."/>
            <person name="Smith H.O."/>
            <person name="Woese C.R."/>
            <person name="Venter J.C."/>
        </authorList>
    </citation>
    <scope>NUCLEOTIDE SEQUENCE [LARGE SCALE GENOMIC DNA]</scope>
    <source>
        <strain>ATCC 43067 / DSM 2661 / JAL-1 / JCM 10045 / NBRC 100440</strain>
    </source>
</reference>
<reference key="2">
    <citation type="patent" date="1999-03-11" number="WO9911821">
        <title>Method for screening restriction endonucleases.</title>
        <authorList>
            <person name="Noren C.J."/>
            <person name="Roberts R.J."/>
            <person name="Patti J."/>
            <person name="Byrd D.R."/>
            <person name="Morgan R.D."/>
        </authorList>
    </citation>
    <scope>CHARACTERIZATION</scope>
</reference>
<reference key="3">
    <citation type="journal article" date="2003" name="Nucleic Acids Res.">
        <title>A nomenclature for restriction enzymes, DNA methyltransferases, homing endonucleases and their genes.</title>
        <authorList>
            <person name="Roberts R.J."/>
            <person name="Belfort M."/>
            <person name="Bestor T."/>
            <person name="Bhagwat A.S."/>
            <person name="Bickle T.A."/>
            <person name="Bitinaite J."/>
            <person name="Blumenthal R.M."/>
            <person name="Degtyarev S.K."/>
            <person name="Dryden D.T."/>
            <person name="Dybvig K."/>
            <person name="Firman K."/>
            <person name="Gromova E.S."/>
            <person name="Gumport R.I."/>
            <person name="Halford S.E."/>
            <person name="Hattman S."/>
            <person name="Heitman J."/>
            <person name="Hornby D.P."/>
            <person name="Janulaitis A."/>
            <person name="Jeltsch A."/>
            <person name="Josephsen J."/>
            <person name="Kiss A."/>
            <person name="Klaenhammer T.R."/>
            <person name="Kobayashi I."/>
            <person name="Kong H."/>
            <person name="Krueger D.H."/>
            <person name="Lacks S."/>
            <person name="Marinus M.G."/>
            <person name="Miyahara M."/>
            <person name="Morgan R.D."/>
            <person name="Murray N.E."/>
            <person name="Nagaraja V."/>
            <person name="Piekarowicz A."/>
            <person name="Pingoud A."/>
            <person name="Raleigh E."/>
            <person name="Rao D.N."/>
            <person name="Reich N."/>
            <person name="Repin V.E."/>
            <person name="Selker E.U."/>
            <person name="Shaw P.C."/>
            <person name="Stein D.C."/>
            <person name="Stoddard B.L."/>
            <person name="Szybalski W."/>
            <person name="Trautner T.A."/>
            <person name="Van Etten J.L."/>
            <person name="Vitor J.M."/>
            <person name="Wilson G.G."/>
            <person name="Xu S.Y."/>
        </authorList>
    </citation>
    <scope>NOMENCLATURE</scope>
    <scope>SUBTYPE</scope>
</reference>
<sequence>MVKLMKKLEDKKGIIEITFEEEREILELPSKPELPKYASQLINLANIFSQGTRPKVVGQMSELIKEFRKTGGRTFEDWKKWYLQKYPNAIDEATEKIWNMLNNFKETLEQLERDDVRKWVEDLVLIKTYEGLMLQDAILKKVAEELGGNYRPSTIEEESKGIDGVIIIDDKEIPVSIKSKTYVNQEKHLSEELKGHLIIYEKKKNKIIVDYSDLLDLVENTK</sequence>
<protein>
    <recommendedName>
        <fullName evidence="1">Type II restriction enzyme MjaI</fullName>
        <shortName>R.MjaI</shortName>
        <ecNumber>3.1.21.4</ecNumber>
    </recommendedName>
    <alternativeName>
        <fullName>Endonuclease MjaI</fullName>
    </alternativeName>
    <alternativeName>
        <fullName>Type-2 restriction enzyme MjaI</fullName>
    </alternativeName>
</protein>
<dbReference type="EC" id="3.1.21.4"/>
<dbReference type="EMBL" id="L77117">
    <property type="protein sequence ID" value="AAB98987.1"/>
    <property type="molecule type" value="Genomic_DNA"/>
</dbReference>
<dbReference type="PIR" id="H64422">
    <property type="entry name" value="H64422"/>
</dbReference>
<dbReference type="REBASE" id="1221">
    <property type="entry name" value="MjaI"/>
</dbReference>
<dbReference type="PaxDb" id="243232-MJ_0984"/>
<dbReference type="EnsemblBacteria" id="AAB98987">
    <property type="protein sequence ID" value="AAB98987"/>
    <property type="gene ID" value="MJ_0984"/>
</dbReference>
<dbReference type="KEGG" id="mja:MJ_0984"/>
<dbReference type="eggNOG" id="arCOG11279">
    <property type="taxonomic scope" value="Archaea"/>
</dbReference>
<dbReference type="HOGENOM" id="CLU_120987_0_0_2"/>
<dbReference type="InParanoid" id="Q58391"/>
<dbReference type="OrthoDB" id="195457at2157"/>
<dbReference type="PRO" id="PR:Q58391"/>
<dbReference type="Proteomes" id="UP000000805">
    <property type="component" value="Chromosome"/>
</dbReference>
<dbReference type="GO" id="GO:0003677">
    <property type="term" value="F:DNA binding"/>
    <property type="evidence" value="ECO:0007669"/>
    <property type="project" value="UniProtKB-KW"/>
</dbReference>
<dbReference type="GO" id="GO:0009036">
    <property type="term" value="F:type II site-specific deoxyribonuclease activity"/>
    <property type="evidence" value="ECO:0007669"/>
    <property type="project" value="UniProtKB-EC"/>
</dbReference>
<dbReference type="GO" id="GO:0009307">
    <property type="term" value="P:DNA restriction-modification system"/>
    <property type="evidence" value="ECO:0007669"/>
    <property type="project" value="UniProtKB-KW"/>
</dbReference>
<dbReference type="InterPro" id="IPR019068">
    <property type="entry name" value="Restrct_endonuc_II_MjaI"/>
</dbReference>
<dbReference type="Pfam" id="PF09568">
    <property type="entry name" value="RE_MjaI"/>
    <property type="match status" value="1"/>
</dbReference>